<sequence length="419" mass="44927">MSRYVFTSESVTEGHPDKICDQVSDAVLDALLAQDSTSRVACETVVNTGLCMITGEVTSKAQVDFIHLVRDVIRDIGYSGARAGGFDATSCAVLVALDQQSPDIAQGVDEADDHAGDPLDKVGAGDQGIMFGYACNETPELMPLPISLAHRLARRLAEVRHNGTLDYLLPDGKTQVSVVYENDKPVEIDTILISTQHTAEVTGLTDEQEVRNRISEDLWTHVVLPATADLPLKPDRANCRYLVNPTGKFVVGGPQGDAGLTGRKIIVDTYGGYARHGGGAFSGKDPTKVDRSAAYAARYVAKALVAAGLANRAEVQLSYAIGVAKPVSILVESFGSGKVSNAELTDLVQEHFDLRPGAIIEQFKLREMPSLNGGRFYRDTAAYGHFGRPDLNLPWEDVGDKAASLKQAEANRIQSGSSL</sequence>
<reference key="1">
    <citation type="journal article" date="2006" name="Proc. Natl. Acad. Sci. U.S.A.">
        <title>Genome sequence of Synechococcus CC9311: insights into adaptation to a coastal environment.</title>
        <authorList>
            <person name="Palenik B."/>
            <person name="Ren Q."/>
            <person name="Dupont C.L."/>
            <person name="Myers G.S."/>
            <person name="Heidelberg J.F."/>
            <person name="Badger J.H."/>
            <person name="Madupu R."/>
            <person name="Nelson W.C."/>
            <person name="Brinkac L.M."/>
            <person name="Dodson R.J."/>
            <person name="Durkin A.S."/>
            <person name="Daugherty S.C."/>
            <person name="Sullivan S.A."/>
            <person name="Khouri H."/>
            <person name="Mohamoud Y."/>
            <person name="Halpin R."/>
            <person name="Paulsen I.T."/>
        </authorList>
    </citation>
    <scope>NUCLEOTIDE SEQUENCE [LARGE SCALE GENOMIC DNA]</scope>
    <source>
        <strain>CC9311</strain>
    </source>
</reference>
<accession>Q0ICR7</accession>
<proteinExistence type="inferred from homology"/>
<name>METK_SYNS3</name>
<comment type="function">
    <text evidence="1">Catalyzes the formation of S-adenosylmethionine (AdoMet) from methionine and ATP. The overall synthetic reaction is composed of two sequential steps, AdoMet formation and the subsequent tripolyphosphate hydrolysis which occurs prior to release of AdoMet from the enzyme.</text>
</comment>
<comment type="catalytic activity">
    <reaction evidence="1">
        <text>L-methionine + ATP + H2O = S-adenosyl-L-methionine + phosphate + diphosphate</text>
        <dbReference type="Rhea" id="RHEA:21080"/>
        <dbReference type="ChEBI" id="CHEBI:15377"/>
        <dbReference type="ChEBI" id="CHEBI:30616"/>
        <dbReference type="ChEBI" id="CHEBI:33019"/>
        <dbReference type="ChEBI" id="CHEBI:43474"/>
        <dbReference type="ChEBI" id="CHEBI:57844"/>
        <dbReference type="ChEBI" id="CHEBI:59789"/>
        <dbReference type="EC" id="2.5.1.6"/>
    </reaction>
</comment>
<comment type="cofactor">
    <cofactor evidence="1">
        <name>Mg(2+)</name>
        <dbReference type="ChEBI" id="CHEBI:18420"/>
    </cofactor>
    <text evidence="1">Binds 2 divalent ions per subunit.</text>
</comment>
<comment type="cofactor">
    <cofactor evidence="1">
        <name>K(+)</name>
        <dbReference type="ChEBI" id="CHEBI:29103"/>
    </cofactor>
    <text evidence="1">Binds 1 potassium ion per subunit.</text>
</comment>
<comment type="pathway">
    <text evidence="1">Amino-acid biosynthesis; S-adenosyl-L-methionine biosynthesis; S-adenosyl-L-methionine from L-methionine: step 1/1.</text>
</comment>
<comment type="subunit">
    <text evidence="1">Homotetramer; dimer of dimers.</text>
</comment>
<comment type="subcellular location">
    <subcellularLocation>
        <location evidence="1">Cytoplasm</location>
    </subcellularLocation>
</comment>
<comment type="similarity">
    <text evidence="1">Belongs to the AdoMet synthase family.</text>
</comment>
<feature type="chain" id="PRO_0000302995" description="S-adenosylmethionine synthase">
    <location>
        <begin position="1"/>
        <end position="419"/>
    </location>
</feature>
<feature type="region of interest" description="Flexible loop" evidence="1">
    <location>
        <begin position="100"/>
        <end position="110"/>
    </location>
</feature>
<feature type="binding site" description="in other chain" evidence="1">
    <location>
        <position position="15"/>
    </location>
    <ligand>
        <name>ATP</name>
        <dbReference type="ChEBI" id="CHEBI:30616"/>
        <note>ligand shared between two neighboring subunits</note>
    </ligand>
</feature>
<feature type="binding site" evidence="1">
    <location>
        <position position="17"/>
    </location>
    <ligand>
        <name>Mg(2+)</name>
        <dbReference type="ChEBI" id="CHEBI:18420"/>
    </ligand>
</feature>
<feature type="binding site" evidence="1">
    <location>
        <position position="43"/>
    </location>
    <ligand>
        <name>K(+)</name>
        <dbReference type="ChEBI" id="CHEBI:29103"/>
    </ligand>
</feature>
<feature type="binding site" description="in other chain" evidence="1">
    <location>
        <position position="56"/>
    </location>
    <ligand>
        <name>L-methionine</name>
        <dbReference type="ChEBI" id="CHEBI:57844"/>
        <note>ligand shared between two neighboring subunits</note>
    </ligand>
</feature>
<feature type="binding site" description="in other chain" evidence="1">
    <location>
        <position position="100"/>
    </location>
    <ligand>
        <name>L-methionine</name>
        <dbReference type="ChEBI" id="CHEBI:57844"/>
        <note>ligand shared between two neighboring subunits</note>
    </ligand>
</feature>
<feature type="binding site" description="in other chain" evidence="1">
    <location>
        <begin position="171"/>
        <end position="173"/>
    </location>
    <ligand>
        <name>ATP</name>
        <dbReference type="ChEBI" id="CHEBI:30616"/>
        <note>ligand shared between two neighboring subunits</note>
    </ligand>
</feature>
<feature type="binding site" description="in other chain" evidence="1">
    <location>
        <begin position="248"/>
        <end position="249"/>
    </location>
    <ligand>
        <name>ATP</name>
        <dbReference type="ChEBI" id="CHEBI:30616"/>
        <note>ligand shared between two neighboring subunits</note>
    </ligand>
</feature>
<feature type="binding site" evidence="1">
    <location>
        <position position="257"/>
    </location>
    <ligand>
        <name>ATP</name>
        <dbReference type="ChEBI" id="CHEBI:30616"/>
        <note>ligand shared between two neighboring subunits</note>
    </ligand>
</feature>
<feature type="binding site" evidence="1">
    <location>
        <position position="257"/>
    </location>
    <ligand>
        <name>L-methionine</name>
        <dbReference type="ChEBI" id="CHEBI:57844"/>
        <note>ligand shared between two neighboring subunits</note>
    </ligand>
</feature>
<feature type="binding site" description="in other chain" evidence="1">
    <location>
        <begin position="263"/>
        <end position="264"/>
    </location>
    <ligand>
        <name>ATP</name>
        <dbReference type="ChEBI" id="CHEBI:30616"/>
        <note>ligand shared between two neighboring subunits</note>
    </ligand>
</feature>
<feature type="binding site" evidence="1">
    <location>
        <position position="280"/>
    </location>
    <ligand>
        <name>ATP</name>
        <dbReference type="ChEBI" id="CHEBI:30616"/>
        <note>ligand shared between two neighboring subunits</note>
    </ligand>
</feature>
<feature type="binding site" evidence="1">
    <location>
        <position position="284"/>
    </location>
    <ligand>
        <name>ATP</name>
        <dbReference type="ChEBI" id="CHEBI:30616"/>
        <note>ligand shared between two neighboring subunits</note>
    </ligand>
</feature>
<feature type="binding site" description="in other chain" evidence="1">
    <location>
        <position position="288"/>
    </location>
    <ligand>
        <name>L-methionine</name>
        <dbReference type="ChEBI" id="CHEBI:57844"/>
        <note>ligand shared between two neighboring subunits</note>
    </ligand>
</feature>
<gene>
    <name evidence="1" type="primary">metK</name>
    <name type="ordered locus">sync_0529</name>
</gene>
<organism>
    <name type="scientific">Synechococcus sp. (strain CC9311)</name>
    <dbReference type="NCBI Taxonomy" id="64471"/>
    <lineage>
        <taxon>Bacteria</taxon>
        <taxon>Bacillati</taxon>
        <taxon>Cyanobacteriota</taxon>
        <taxon>Cyanophyceae</taxon>
        <taxon>Synechococcales</taxon>
        <taxon>Synechococcaceae</taxon>
        <taxon>Synechococcus</taxon>
    </lineage>
</organism>
<evidence type="ECO:0000255" key="1">
    <source>
        <dbReference type="HAMAP-Rule" id="MF_00086"/>
    </source>
</evidence>
<keyword id="KW-0067">ATP-binding</keyword>
<keyword id="KW-0963">Cytoplasm</keyword>
<keyword id="KW-0460">Magnesium</keyword>
<keyword id="KW-0479">Metal-binding</keyword>
<keyword id="KW-0547">Nucleotide-binding</keyword>
<keyword id="KW-0554">One-carbon metabolism</keyword>
<keyword id="KW-0630">Potassium</keyword>
<keyword id="KW-1185">Reference proteome</keyword>
<keyword id="KW-0808">Transferase</keyword>
<protein>
    <recommendedName>
        <fullName evidence="1">S-adenosylmethionine synthase</fullName>
        <shortName evidence="1">AdoMet synthase</shortName>
        <ecNumber evidence="1">2.5.1.6</ecNumber>
    </recommendedName>
    <alternativeName>
        <fullName evidence="1">MAT</fullName>
    </alternativeName>
    <alternativeName>
        <fullName evidence="1">Methionine adenosyltransferase</fullName>
    </alternativeName>
</protein>
<dbReference type="EC" id="2.5.1.6" evidence="1"/>
<dbReference type="EMBL" id="CP000435">
    <property type="protein sequence ID" value="ABI47314.1"/>
    <property type="molecule type" value="Genomic_DNA"/>
</dbReference>
<dbReference type="RefSeq" id="WP_011618487.1">
    <property type="nucleotide sequence ID" value="NC_008319.1"/>
</dbReference>
<dbReference type="SMR" id="Q0ICR7"/>
<dbReference type="STRING" id="64471.sync_0529"/>
<dbReference type="KEGG" id="syg:sync_0529"/>
<dbReference type="eggNOG" id="COG0192">
    <property type="taxonomic scope" value="Bacteria"/>
</dbReference>
<dbReference type="HOGENOM" id="CLU_041802_1_1_3"/>
<dbReference type="OrthoDB" id="9801686at2"/>
<dbReference type="UniPathway" id="UPA00315">
    <property type="reaction ID" value="UER00080"/>
</dbReference>
<dbReference type="Proteomes" id="UP000001961">
    <property type="component" value="Chromosome"/>
</dbReference>
<dbReference type="GO" id="GO:0005737">
    <property type="term" value="C:cytoplasm"/>
    <property type="evidence" value="ECO:0007669"/>
    <property type="project" value="UniProtKB-SubCell"/>
</dbReference>
<dbReference type="GO" id="GO:0005524">
    <property type="term" value="F:ATP binding"/>
    <property type="evidence" value="ECO:0007669"/>
    <property type="project" value="UniProtKB-UniRule"/>
</dbReference>
<dbReference type="GO" id="GO:0000287">
    <property type="term" value="F:magnesium ion binding"/>
    <property type="evidence" value="ECO:0007669"/>
    <property type="project" value="UniProtKB-UniRule"/>
</dbReference>
<dbReference type="GO" id="GO:0004478">
    <property type="term" value="F:methionine adenosyltransferase activity"/>
    <property type="evidence" value="ECO:0007669"/>
    <property type="project" value="UniProtKB-UniRule"/>
</dbReference>
<dbReference type="GO" id="GO:0006730">
    <property type="term" value="P:one-carbon metabolic process"/>
    <property type="evidence" value="ECO:0007669"/>
    <property type="project" value="UniProtKB-KW"/>
</dbReference>
<dbReference type="GO" id="GO:0006556">
    <property type="term" value="P:S-adenosylmethionine biosynthetic process"/>
    <property type="evidence" value="ECO:0007669"/>
    <property type="project" value="UniProtKB-UniRule"/>
</dbReference>
<dbReference type="CDD" id="cd18079">
    <property type="entry name" value="S-AdoMet_synt"/>
    <property type="match status" value="1"/>
</dbReference>
<dbReference type="FunFam" id="3.30.300.10:FF:000003">
    <property type="entry name" value="S-adenosylmethionine synthase"/>
    <property type="match status" value="1"/>
</dbReference>
<dbReference type="Gene3D" id="3.30.300.10">
    <property type="match status" value="3"/>
</dbReference>
<dbReference type="HAMAP" id="MF_00086">
    <property type="entry name" value="S_AdoMet_synth1"/>
    <property type="match status" value="1"/>
</dbReference>
<dbReference type="InterPro" id="IPR022631">
    <property type="entry name" value="ADOMET_SYNTHASE_CS"/>
</dbReference>
<dbReference type="InterPro" id="IPR022630">
    <property type="entry name" value="S-AdoMet_synt_C"/>
</dbReference>
<dbReference type="InterPro" id="IPR022629">
    <property type="entry name" value="S-AdoMet_synt_central"/>
</dbReference>
<dbReference type="InterPro" id="IPR022628">
    <property type="entry name" value="S-AdoMet_synt_N"/>
</dbReference>
<dbReference type="InterPro" id="IPR002133">
    <property type="entry name" value="S-AdoMet_synthetase"/>
</dbReference>
<dbReference type="InterPro" id="IPR022636">
    <property type="entry name" value="S-AdoMet_synthetase_sfam"/>
</dbReference>
<dbReference type="NCBIfam" id="TIGR01034">
    <property type="entry name" value="metK"/>
    <property type="match status" value="1"/>
</dbReference>
<dbReference type="PANTHER" id="PTHR11964">
    <property type="entry name" value="S-ADENOSYLMETHIONINE SYNTHETASE"/>
    <property type="match status" value="1"/>
</dbReference>
<dbReference type="Pfam" id="PF02773">
    <property type="entry name" value="S-AdoMet_synt_C"/>
    <property type="match status" value="1"/>
</dbReference>
<dbReference type="Pfam" id="PF02772">
    <property type="entry name" value="S-AdoMet_synt_M"/>
    <property type="match status" value="1"/>
</dbReference>
<dbReference type="Pfam" id="PF00438">
    <property type="entry name" value="S-AdoMet_synt_N"/>
    <property type="match status" value="1"/>
</dbReference>
<dbReference type="PIRSF" id="PIRSF000497">
    <property type="entry name" value="MAT"/>
    <property type="match status" value="1"/>
</dbReference>
<dbReference type="SUPFAM" id="SSF55973">
    <property type="entry name" value="S-adenosylmethionine synthetase"/>
    <property type="match status" value="3"/>
</dbReference>
<dbReference type="PROSITE" id="PS00376">
    <property type="entry name" value="ADOMET_SYNTHASE_1"/>
    <property type="match status" value="1"/>
</dbReference>
<dbReference type="PROSITE" id="PS00377">
    <property type="entry name" value="ADOMET_SYNTHASE_2"/>
    <property type="match status" value="1"/>
</dbReference>